<accession>Q9HL35</accession>
<organism>
    <name type="scientific">Thermoplasma acidophilum (strain ATCC 25905 / DSM 1728 / JCM 9062 / NBRC 15155 / AMRC-C165)</name>
    <dbReference type="NCBI Taxonomy" id="273075"/>
    <lineage>
        <taxon>Archaea</taxon>
        <taxon>Methanobacteriati</taxon>
        <taxon>Thermoplasmatota</taxon>
        <taxon>Thermoplasmata</taxon>
        <taxon>Thermoplasmatales</taxon>
        <taxon>Thermoplasmataceae</taxon>
        <taxon>Thermoplasma</taxon>
    </lineage>
</organism>
<proteinExistence type="inferred from homology"/>
<comment type="function">
    <text evidence="1">Catalyzes the conversion of dihydroorotate to orotate with NAD(+) as electron acceptor.</text>
</comment>
<comment type="catalytic activity">
    <reaction>
        <text>(S)-dihydroorotate + NAD(+) = orotate + NADH + H(+)</text>
        <dbReference type="Rhea" id="RHEA:13513"/>
        <dbReference type="ChEBI" id="CHEBI:15378"/>
        <dbReference type="ChEBI" id="CHEBI:30839"/>
        <dbReference type="ChEBI" id="CHEBI:30864"/>
        <dbReference type="ChEBI" id="CHEBI:57540"/>
        <dbReference type="ChEBI" id="CHEBI:57945"/>
        <dbReference type="EC" id="1.3.1.14"/>
    </reaction>
</comment>
<comment type="cofactor">
    <cofactor evidence="1">
        <name>FMN</name>
        <dbReference type="ChEBI" id="CHEBI:58210"/>
    </cofactor>
    <text evidence="1">Binds 1 FMN per subunit.</text>
</comment>
<comment type="pathway">
    <text>Pyrimidine metabolism; UMP biosynthesis via de novo pathway; orotate from (S)-dihydroorotate (NAD(+) route): step 1/1.</text>
</comment>
<comment type="subunit">
    <text evidence="1">Heterotetramer of 2 PyrK and 2 PyrD type B subunits.</text>
</comment>
<comment type="subcellular location">
    <subcellularLocation>
        <location evidence="1">Cytoplasm</location>
    </subcellularLocation>
</comment>
<comment type="similarity">
    <text evidence="2">Belongs to the dihydroorotate dehydrogenase family. Type 1 subfamily.</text>
</comment>
<gene>
    <name type="primary">pyrD</name>
    <name type="ordered locus">Ta0404</name>
</gene>
<feature type="chain" id="PRO_0000148418" description="Dihydroorotate dehydrogenase B (NAD(+)), catalytic subunit">
    <location>
        <begin position="1"/>
        <end position="300"/>
    </location>
</feature>
<feature type="active site" description="Nucleophile">
    <location>
        <position position="128"/>
    </location>
</feature>
<feature type="binding site" evidence="1">
    <location>
        <position position="21"/>
    </location>
    <ligand>
        <name>FMN</name>
        <dbReference type="ChEBI" id="CHEBI:58210"/>
    </ligand>
</feature>
<feature type="binding site" evidence="1">
    <location>
        <begin position="45"/>
        <end position="46"/>
    </location>
    <ligand>
        <name>FMN</name>
        <dbReference type="ChEBI" id="CHEBI:58210"/>
    </ligand>
</feature>
<feature type="binding site" evidence="1">
    <location>
        <position position="45"/>
    </location>
    <ligand>
        <name>substrate</name>
    </ligand>
</feature>
<feature type="binding site" evidence="1">
    <location>
        <begin position="69"/>
        <end position="73"/>
    </location>
    <ligand>
        <name>substrate</name>
    </ligand>
</feature>
<feature type="binding site" evidence="1">
    <location>
        <position position="125"/>
    </location>
    <ligand>
        <name>FMN</name>
        <dbReference type="ChEBI" id="CHEBI:58210"/>
    </ligand>
</feature>
<feature type="binding site" evidence="1">
    <location>
        <position position="125"/>
    </location>
    <ligand>
        <name>substrate</name>
    </ligand>
</feature>
<feature type="binding site" evidence="1">
    <location>
        <position position="163"/>
    </location>
    <ligand>
        <name>FMN</name>
        <dbReference type="ChEBI" id="CHEBI:58210"/>
    </ligand>
</feature>
<feature type="binding site" evidence="1">
    <location>
        <position position="187"/>
    </location>
    <ligand>
        <name>FMN</name>
        <dbReference type="ChEBI" id="CHEBI:58210"/>
    </ligand>
</feature>
<feature type="binding site" evidence="1">
    <location>
        <begin position="188"/>
        <end position="189"/>
    </location>
    <ligand>
        <name>substrate</name>
    </ligand>
</feature>
<feature type="binding site" evidence="1">
    <location>
        <position position="213"/>
    </location>
    <ligand>
        <name>FMN</name>
        <dbReference type="ChEBI" id="CHEBI:58210"/>
    </ligand>
</feature>
<feature type="binding site" evidence="1">
    <location>
        <begin position="239"/>
        <end position="240"/>
    </location>
    <ligand>
        <name>FMN</name>
        <dbReference type="ChEBI" id="CHEBI:58210"/>
    </ligand>
</feature>
<feature type="binding site" evidence="1">
    <location>
        <begin position="261"/>
        <end position="262"/>
    </location>
    <ligand>
        <name>FMN</name>
        <dbReference type="ChEBI" id="CHEBI:58210"/>
    </ligand>
</feature>
<reference key="1">
    <citation type="journal article" date="2000" name="Nature">
        <title>The genome sequence of the thermoacidophilic scavenger Thermoplasma acidophilum.</title>
        <authorList>
            <person name="Ruepp A."/>
            <person name="Graml W."/>
            <person name="Santos-Martinez M.-L."/>
            <person name="Koretke K.K."/>
            <person name="Volker C."/>
            <person name="Mewes H.-W."/>
            <person name="Frishman D."/>
            <person name="Stocker S."/>
            <person name="Lupas A.N."/>
            <person name="Baumeister W."/>
        </authorList>
    </citation>
    <scope>NUCLEOTIDE SEQUENCE [LARGE SCALE GENOMIC DNA]</scope>
    <source>
        <strain>ATCC 25905 / DSM 1728 / JCM 9062 / NBRC 15155 / AMRC-C165</strain>
    </source>
</reference>
<dbReference type="EC" id="1.3.1.14"/>
<dbReference type="EMBL" id="AL445064">
    <property type="protein sequence ID" value="CAC11547.1"/>
    <property type="molecule type" value="Genomic_DNA"/>
</dbReference>
<dbReference type="RefSeq" id="WP_010900832.1">
    <property type="nucleotide sequence ID" value="NC_002578.1"/>
</dbReference>
<dbReference type="SMR" id="Q9HL35"/>
<dbReference type="FunCoup" id="Q9HL35">
    <property type="interactions" value="68"/>
</dbReference>
<dbReference type="STRING" id="273075.gene:9571624"/>
<dbReference type="PaxDb" id="273075-Ta0404"/>
<dbReference type="EnsemblBacteria" id="CAC11547">
    <property type="protein sequence ID" value="CAC11547"/>
    <property type="gene ID" value="CAC11547"/>
</dbReference>
<dbReference type="KEGG" id="tac:Ta0404"/>
<dbReference type="eggNOG" id="arCOG00603">
    <property type="taxonomic scope" value="Archaea"/>
</dbReference>
<dbReference type="HOGENOM" id="CLU_042042_0_0_2"/>
<dbReference type="InParanoid" id="Q9HL35"/>
<dbReference type="OrthoDB" id="36608at2157"/>
<dbReference type="UniPathway" id="UPA00070">
    <property type="reaction ID" value="UER00945"/>
</dbReference>
<dbReference type="Proteomes" id="UP000001024">
    <property type="component" value="Chromosome"/>
</dbReference>
<dbReference type="GO" id="GO:0005737">
    <property type="term" value="C:cytoplasm"/>
    <property type="evidence" value="ECO:0007669"/>
    <property type="project" value="UniProtKB-SubCell"/>
</dbReference>
<dbReference type="GO" id="GO:0004589">
    <property type="term" value="F:dihydroorotate dehydrogenase (NAD+) activity"/>
    <property type="evidence" value="ECO:0007669"/>
    <property type="project" value="UniProtKB-EC"/>
</dbReference>
<dbReference type="GO" id="GO:0050661">
    <property type="term" value="F:NADP binding"/>
    <property type="evidence" value="ECO:0007669"/>
    <property type="project" value="TreeGrafter"/>
</dbReference>
<dbReference type="GO" id="GO:0002058">
    <property type="term" value="F:uracil binding"/>
    <property type="evidence" value="ECO:0007669"/>
    <property type="project" value="TreeGrafter"/>
</dbReference>
<dbReference type="GO" id="GO:0006207">
    <property type="term" value="P:'de novo' pyrimidine nucleobase biosynthetic process"/>
    <property type="evidence" value="ECO:0007669"/>
    <property type="project" value="InterPro"/>
</dbReference>
<dbReference type="GO" id="GO:0044205">
    <property type="term" value="P:'de novo' UMP biosynthetic process"/>
    <property type="evidence" value="ECO:0007669"/>
    <property type="project" value="UniProtKB-UniRule"/>
</dbReference>
<dbReference type="GO" id="GO:0006210">
    <property type="term" value="P:thymine catabolic process"/>
    <property type="evidence" value="ECO:0007669"/>
    <property type="project" value="TreeGrafter"/>
</dbReference>
<dbReference type="GO" id="GO:0006212">
    <property type="term" value="P:uracil catabolic process"/>
    <property type="evidence" value="ECO:0007669"/>
    <property type="project" value="TreeGrafter"/>
</dbReference>
<dbReference type="CDD" id="cd04740">
    <property type="entry name" value="DHOD_1B_like"/>
    <property type="match status" value="1"/>
</dbReference>
<dbReference type="FunFam" id="3.20.20.70:FF:000027">
    <property type="entry name" value="Dihydropyrimidine dehydrogenase [NADP(+)]"/>
    <property type="match status" value="1"/>
</dbReference>
<dbReference type="Gene3D" id="3.20.20.70">
    <property type="entry name" value="Aldolase class I"/>
    <property type="match status" value="1"/>
</dbReference>
<dbReference type="HAMAP" id="MF_00224">
    <property type="entry name" value="DHO_dh_type1"/>
    <property type="match status" value="1"/>
</dbReference>
<dbReference type="InterPro" id="IPR013785">
    <property type="entry name" value="Aldolase_TIM"/>
</dbReference>
<dbReference type="InterPro" id="IPR033888">
    <property type="entry name" value="DHOD_1B"/>
</dbReference>
<dbReference type="InterPro" id="IPR024920">
    <property type="entry name" value="Dihydroorotate_DH_1"/>
</dbReference>
<dbReference type="InterPro" id="IPR012135">
    <property type="entry name" value="Dihydroorotate_DH_1_2"/>
</dbReference>
<dbReference type="InterPro" id="IPR005720">
    <property type="entry name" value="Dihydroorotate_DH_cat"/>
</dbReference>
<dbReference type="InterPro" id="IPR001295">
    <property type="entry name" value="Dihydroorotate_DH_CS"/>
</dbReference>
<dbReference type="InterPro" id="IPR049622">
    <property type="entry name" value="Dihydroorotate_DH_I"/>
</dbReference>
<dbReference type="NCBIfam" id="NF005574">
    <property type="entry name" value="PRK07259.1"/>
    <property type="match status" value="1"/>
</dbReference>
<dbReference type="NCBIfam" id="TIGR01037">
    <property type="entry name" value="pyrD_sub1_fam"/>
    <property type="match status" value="1"/>
</dbReference>
<dbReference type="PANTHER" id="PTHR43073">
    <property type="entry name" value="DIHYDROPYRIMIDINE DEHYDROGENASE [NADP(+)]"/>
    <property type="match status" value="1"/>
</dbReference>
<dbReference type="PANTHER" id="PTHR43073:SF2">
    <property type="entry name" value="DIHYDROPYRIMIDINE DEHYDROGENASE [NADP(+)]"/>
    <property type="match status" value="1"/>
</dbReference>
<dbReference type="Pfam" id="PF01180">
    <property type="entry name" value="DHO_dh"/>
    <property type="match status" value="1"/>
</dbReference>
<dbReference type="PIRSF" id="PIRSF000164">
    <property type="entry name" value="DHO_oxidase"/>
    <property type="match status" value="1"/>
</dbReference>
<dbReference type="SUPFAM" id="SSF51395">
    <property type="entry name" value="FMN-linked oxidoreductases"/>
    <property type="match status" value="1"/>
</dbReference>
<dbReference type="PROSITE" id="PS00911">
    <property type="entry name" value="DHODEHASE_1"/>
    <property type="match status" value="1"/>
</dbReference>
<dbReference type="PROSITE" id="PS00912">
    <property type="entry name" value="DHODEHASE_2"/>
    <property type="match status" value="1"/>
</dbReference>
<protein>
    <recommendedName>
        <fullName>Dihydroorotate dehydrogenase B (NAD(+)), catalytic subunit</fullName>
        <shortName>DHOD B</shortName>
        <shortName>DHODase B</shortName>
        <shortName>DHOdehase B</shortName>
        <ecNumber>1.3.1.14</ecNumber>
    </recommendedName>
    <alternativeName>
        <fullName>Dihydroorotate oxidase B</fullName>
    </alternativeName>
    <alternativeName>
        <fullName>Orotate reductase (NADH)</fullName>
    </alternativeName>
</protein>
<sequence length="300" mass="32057">MADLSTSVAGIRLENPLMLASGILDENGYTMLDVMNNGAAAVVTKSIGMEERNGYSAPVIVEYGDSLINAVGLSNPGIDNFAEEIRIAKRSGKPVIGSVFASDAESFVNLGRKMQEYGCDAVELNLSCPHVKGFGLEVGSDPDLVEDIVNEMKSKISVPVFAKLSPNVSDIIEIAKAAEKADAYVLINTVKAMKIDIRARMPVLTNAYGGLSGPAIKPVGVRYVYEVKKETGKDIIGVGGITTYEDAVEYIMAGASAVQIGTALYTVGKSVFRNIISQMNTFMDDEKFHSIQDMVGVAIR</sequence>
<evidence type="ECO:0000250" key="1"/>
<evidence type="ECO:0000305" key="2"/>
<keyword id="KW-0963">Cytoplasm</keyword>
<keyword id="KW-0285">Flavoprotein</keyword>
<keyword id="KW-0288">FMN</keyword>
<keyword id="KW-0520">NAD</keyword>
<keyword id="KW-0560">Oxidoreductase</keyword>
<keyword id="KW-0665">Pyrimidine biosynthesis</keyword>
<keyword id="KW-1185">Reference proteome</keyword>
<name>PYRDB_THEAC</name>